<comment type="function">
    <text evidence="1 3 5">CRISPR (clustered regularly interspaced short palindromic repeat) is an adaptive immune system that provides protection against mobile genetic elements (viruses, transposable elements and conjugative plasmids). CRISPR clusters contain spacers, sequences complementary to antecedent mobile elements, and target invading nucleic acids. CRISPR clusters are transcribed and processed into CRISPR RNA (crRNA). The type III-A Csm effector complex binds crRNA and acts as a crRNA-guided RNase, DNase and cyclic oligoadenylate synthase; binding of target RNA cognate to the crRNA is required for all activities (Probable). This CRISPR-Cas system protects bacteria against transformation with plasmids containing DNA homologous to its spacer regions (PubMed:29979631). This subunit is a single-strand-specific endoribonuclease (ssRNase) that is stimulated by cyclic oligoadenylates (cOA) produced by the Cas10 subunit of the Csm effector complex (By similarity).</text>
</comment>
<comment type="activity regulation">
    <text evidence="1">Non-specific ssRNase activity is allosterically activated by cyclic oligoadenylates (cOA), a second messenger produced by Cas10 of the ternary Csm effector complex in the presence of a cognate target RNA.</text>
</comment>
<comment type="subunit">
    <text evidence="2">Homodimer; the composite ssRNase active site is formed at the dimer interface.</text>
</comment>
<comment type="domain">
    <text evidence="2">The N-terminal CRISPR-associated Rossman fold (CARF) probably binds the cOA effector. ssRNase activity resides in the C-terminal HEPN domain.</text>
</comment>
<comment type="disruption phenotype">
    <text evidence="3">Deletion of the entire CRISPR-Cas locus (cas6 to cas2, Rv2824c to Rv2816c) decreases resistance to plasmids encoding spacer elements about 6-fold.</text>
</comment>
<comment type="miscellaneous">
    <text evidence="4">Encoded in a type III-A CRISPR locus.</text>
</comment>
<comment type="similarity">
    <text evidence="4">Belongs to the CRISPR-associated Csm6 family.</text>
</comment>
<comment type="sequence caution">
    <conflict type="erroneous initiation">
        <sequence resource="EMBL-CDS" id="CCP45618"/>
    </conflict>
    <text>Truncated N-terminus.</text>
</comment>
<dbReference type="EC" id="3.1.-.-"/>
<dbReference type="EMBL" id="AL123456">
    <property type="protein sequence ID" value="CCP45618.1"/>
    <property type="status" value="ALT_INIT"/>
    <property type="molecule type" value="Genomic_DNA"/>
</dbReference>
<dbReference type="PIR" id="E70691">
    <property type="entry name" value="E70691"/>
</dbReference>
<dbReference type="RefSeq" id="NP_217334.1">
    <property type="nucleotide sequence ID" value="NC_000962.3"/>
</dbReference>
<dbReference type="RefSeq" id="WP_003899494.1">
    <property type="nucleotide sequence ID" value="NZ_NVQJ01000006.1"/>
</dbReference>
<dbReference type="RefSeq" id="WP_003904058.1">
    <property type="nucleotide sequence ID" value="NC_000962.3"/>
</dbReference>
<dbReference type="SMR" id="P71635"/>
<dbReference type="STRING" id="83332.Rv2818c"/>
<dbReference type="PaxDb" id="83332-Rv2818c"/>
<dbReference type="DNASU" id="888510"/>
<dbReference type="GeneID" id="888510"/>
<dbReference type="KEGG" id="mtu:Rv2818c"/>
<dbReference type="PATRIC" id="fig|83332.12.peg.3143"/>
<dbReference type="TubercuList" id="Rv2818c"/>
<dbReference type="eggNOG" id="ENOG502Z9RR">
    <property type="taxonomic scope" value="Bacteria"/>
</dbReference>
<dbReference type="InParanoid" id="P71635"/>
<dbReference type="OrthoDB" id="5243123at2"/>
<dbReference type="Proteomes" id="UP000001584">
    <property type="component" value="Chromosome"/>
</dbReference>
<dbReference type="GO" id="GO:0004519">
    <property type="term" value="F:endonuclease activity"/>
    <property type="evidence" value="ECO:0007669"/>
    <property type="project" value="UniProtKB-KW"/>
</dbReference>
<dbReference type="GO" id="GO:0051607">
    <property type="term" value="P:defense response to virus"/>
    <property type="evidence" value="ECO:0007669"/>
    <property type="project" value="UniProtKB-KW"/>
</dbReference>
<dbReference type="CDD" id="cd09699">
    <property type="entry name" value="Csm6_III-A"/>
    <property type="match status" value="1"/>
</dbReference>
<dbReference type="InterPro" id="IPR013489">
    <property type="entry name" value="CRISPR-assoc_prot_Csm6"/>
</dbReference>
<dbReference type="InterPro" id="IPR053955">
    <property type="entry name" value="Csm6_CARF"/>
</dbReference>
<dbReference type="InterPro" id="IPR053941">
    <property type="entry name" value="Csm6_HEPN"/>
</dbReference>
<dbReference type="NCBIfam" id="TIGR02672">
    <property type="entry name" value="cas_csm6"/>
    <property type="match status" value="1"/>
</dbReference>
<dbReference type="Pfam" id="PF22206">
    <property type="entry name" value="Cas_Csm6_6H"/>
    <property type="match status" value="1"/>
</dbReference>
<dbReference type="Pfam" id="PF22208">
    <property type="entry name" value="Cas_Csm6_CARF"/>
    <property type="match status" value="1"/>
</dbReference>
<dbReference type="Pfam" id="PF09659">
    <property type="entry name" value="Cas_Csm6_HEPN"/>
    <property type="match status" value="1"/>
</dbReference>
<protein>
    <recommendedName>
        <fullName>CRISPR system endoribonuclease Csm6</fullName>
        <ecNumber>3.1.-.-</ecNumber>
    </recommendedName>
    <alternativeName>
        <fullName>CRISPR type III-A associated protein Csm6</fullName>
    </alternativeName>
</protein>
<evidence type="ECO:0000250" key="1">
    <source>
        <dbReference type="UniProtKB" id="A0A0A7HIX6"/>
    </source>
</evidence>
<evidence type="ECO:0000250" key="2">
    <source>
        <dbReference type="UniProtKB" id="Q53W17"/>
    </source>
</evidence>
<evidence type="ECO:0000269" key="3">
    <source>
    </source>
</evidence>
<evidence type="ECO:0000305" key="4"/>
<evidence type="ECO:0000305" key="5">
    <source>
    </source>
</evidence>
<organism>
    <name type="scientific">Mycobacterium tuberculosis (strain ATCC 25618 / H37Rv)</name>
    <dbReference type="NCBI Taxonomy" id="83332"/>
    <lineage>
        <taxon>Bacteria</taxon>
        <taxon>Bacillati</taxon>
        <taxon>Actinomycetota</taxon>
        <taxon>Actinomycetes</taxon>
        <taxon>Mycobacteriales</taxon>
        <taxon>Mycobacteriaceae</taxon>
        <taxon>Mycobacterium</taxon>
        <taxon>Mycobacterium tuberculosis complex</taxon>
    </lineage>
</organism>
<gene>
    <name type="primary">csm6</name>
    <name type="ordered locus">Rv2818c</name>
</gene>
<proteinExistence type="evidence at protein level"/>
<accession>P71635</accession>
<accession>L0TDF8</accession>
<keyword id="KW-0051">Antiviral defense</keyword>
<keyword id="KW-0255">Endonuclease</keyword>
<keyword id="KW-0378">Hydrolase</keyword>
<keyword id="KW-0540">Nuclease</keyword>
<keyword id="KW-1185">Reference proteome</keyword>
<name>CSM6_MYCTU</name>
<sequence>MILFSPIGTADPITALGDGPMLHIVRHYRPIVVVLFLSAEIAAFENADRRYSAAITRLAPETDVRIVTYTNPSVHRFDLFVPVFRNHLVELSAEFPDRTILLNTSSGTPAMQAALVAINVFGIPRTTAVQVSTPARALSKPGDRESPDAYDLELMWDANDDNQPGAPNRCFEATSAALGALLERANLKQLIVSYDYSAAVTIAADSRLPDQVSNLIRGAMHRSRLEHLVAPKFFKDTAFTYDPANKVAEYISALALLAKREQWAEFARSATPAITIVLRAAVAKHLPEDRYLDDMGRVDRRKLEREPEIRCALKHPPKSPNAEWYLYTKDWLALLRQFAPDRVGALEVLGRFESRVRNTAAHEIVSISEDRITKDGGLLPEQLLKILARETGADLTLYDRLNDEIIRQIDMAPLG</sequence>
<feature type="chain" id="PRO_0000418229" description="CRISPR system endoribonuclease Csm6">
    <location>
        <begin position="1"/>
        <end position="415"/>
    </location>
</feature>
<feature type="region of interest" description="CARF domain" evidence="2">
    <location>
        <begin position="1"/>
        <end position="148"/>
    </location>
</feature>
<feature type="region of interest" description="HEPN domain" evidence="2">
    <location>
        <begin position="149"/>
        <end position="415"/>
    </location>
</feature>
<reference key="1">
    <citation type="journal article" date="1998" name="Nature">
        <title>Deciphering the biology of Mycobacterium tuberculosis from the complete genome sequence.</title>
        <authorList>
            <person name="Cole S.T."/>
            <person name="Brosch R."/>
            <person name="Parkhill J."/>
            <person name="Garnier T."/>
            <person name="Churcher C.M."/>
            <person name="Harris D.E."/>
            <person name="Gordon S.V."/>
            <person name="Eiglmeier K."/>
            <person name="Gas S."/>
            <person name="Barry C.E. III"/>
            <person name="Tekaia F."/>
            <person name="Badcock K."/>
            <person name="Basham D."/>
            <person name="Brown D."/>
            <person name="Chillingworth T."/>
            <person name="Connor R."/>
            <person name="Davies R.M."/>
            <person name="Devlin K."/>
            <person name="Feltwell T."/>
            <person name="Gentles S."/>
            <person name="Hamlin N."/>
            <person name="Holroyd S."/>
            <person name="Hornsby T."/>
            <person name="Jagels K."/>
            <person name="Krogh A."/>
            <person name="McLean J."/>
            <person name="Moule S."/>
            <person name="Murphy L.D."/>
            <person name="Oliver S."/>
            <person name="Osborne J."/>
            <person name="Quail M.A."/>
            <person name="Rajandream M.A."/>
            <person name="Rogers J."/>
            <person name="Rutter S."/>
            <person name="Seeger K."/>
            <person name="Skelton S."/>
            <person name="Squares S."/>
            <person name="Squares R."/>
            <person name="Sulston J.E."/>
            <person name="Taylor K."/>
            <person name="Whitehead S."/>
            <person name="Barrell B.G."/>
        </authorList>
    </citation>
    <scope>NUCLEOTIDE SEQUENCE [LARGE SCALE GENOMIC DNA]</scope>
    <source>
        <strain>ATCC 25618 / H37Rv</strain>
    </source>
</reference>
<reference key="2">
    <citation type="journal article" date="2011" name="Mol. Cell. Proteomics">
        <title>Proteogenomic analysis of Mycobacterium tuberculosis by high resolution mass spectrometry.</title>
        <authorList>
            <person name="Kelkar D.S."/>
            <person name="Kumar D."/>
            <person name="Kumar P."/>
            <person name="Balakrishnan L."/>
            <person name="Muthusamy B."/>
            <person name="Yadav A.K."/>
            <person name="Shrivastava P."/>
            <person name="Marimuthu A."/>
            <person name="Anand S."/>
            <person name="Sundaram H."/>
            <person name="Kingsbury R."/>
            <person name="Harsha H.C."/>
            <person name="Nair B."/>
            <person name="Prasad T.S."/>
            <person name="Chauhan D.S."/>
            <person name="Katoch K."/>
            <person name="Katoch V.M."/>
            <person name="Kumar P."/>
            <person name="Chaerkady R."/>
            <person name="Ramachandran S."/>
            <person name="Dash D."/>
            <person name="Pandey A."/>
        </authorList>
    </citation>
    <scope>IDENTIFICATION BY MASS SPECTROMETRY [LARGE SCALE ANALYSIS]</scope>
    <source>
        <strain>ATCC 25618 / H37Rv</strain>
    </source>
</reference>
<reference key="3">
    <citation type="journal article" date="2019" name="FASEB J.">
        <title>Mycobacterium tuberculosis type III-A CRISPR/Cas system crRNA and its maturation have atypical features.</title>
        <authorList>
            <person name="Wei W."/>
            <person name="Zhang S."/>
            <person name="Fleming J."/>
            <person name="Chen Y."/>
            <person name="Li Z."/>
            <person name="Fan S."/>
            <person name="Liu Y."/>
            <person name="Wang W."/>
            <person name="Wang T."/>
            <person name="Liu Y."/>
            <person name="Ren B."/>
            <person name="Wang M."/>
            <person name="Jiao J."/>
            <person name="Chen Y."/>
            <person name="Zhou Y."/>
            <person name="Zhou Y."/>
            <person name="Gu S."/>
            <person name="Zhang X."/>
            <person name="Wan L."/>
            <person name="Chen T."/>
            <person name="Zhou L."/>
            <person name="Chen Y."/>
            <person name="Zhang X.E."/>
            <person name="Li C."/>
            <person name="Zhang H."/>
            <person name="Bi L."/>
        </authorList>
    </citation>
    <scope>FUNCTION IN PLASMID RESISTANCE</scope>
    <scope>DISRUPTION PHENOTYPE</scope>
    <source>
        <strain>H37Rv</strain>
    </source>
</reference>